<accession>Q08868</accession>
<accession>Q07363</accession>
<gene>
    <name type="primary">plpA</name>
</gene>
<dbReference type="EMBL" id="L11037">
    <property type="protein sequence ID" value="AAA25538.1"/>
    <property type="molecule type" value="Genomic_DNA"/>
</dbReference>
<dbReference type="EMBL" id="M91072">
    <property type="protein sequence ID" value="AAA25541.1"/>
    <property type="molecule type" value="Genomic_DNA"/>
</dbReference>
<dbReference type="EMBL" id="L16627">
    <property type="protein sequence ID" value="AAA25546.1"/>
    <property type="molecule type" value="Genomic_DNA"/>
</dbReference>
<dbReference type="PIR" id="JN0751">
    <property type="entry name" value="JN0751"/>
</dbReference>
<dbReference type="RefSeq" id="WP_006249127.1">
    <property type="nucleotide sequence ID" value="NZ_VAJK01000005.1"/>
</dbReference>
<dbReference type="SMR" id="Q08868"/>
<dbReference type="STRING" id="75985.WC39_10140"/>
<dbReference type="OrthoDB" id="9812878at2"/>
<dbReference type="GO" id="GO:0009279">
    <property type="term" value="C:cell outer membrane"/>
    <property type="evidence" value="ECO:0007669"/>
    <property type="project" value="UniProtKB-SubCell"/>
</dbReference>
<dbReference type="CDD" id="cd13598">
    <property type="entry name" value="PBP2_lipoprotein_IlpA_like"/>
    <property type="match status" value="1"/>
</dbReference>
<dbReference type="Gene3D" id="3.40.190.10">
    <property type="entry name" value="Periplasmic binding protein-like II"/>
    <property type="match status" value="2"/>
</dbReference>
<dbReference type="InterPro" id="IPR004872">
    <property type="entry name" value="Lipoprotein_NlpA"/>
</dbReference>
<dbReference type="NCBIfam" id="TIGR00363">
    <property type="entry name" value="MetQ/NlpA family lipoprotein"/>
    <property type="match status" value="1"/>
</dbReference>
<dbReference type="PANTHER" id="PTHR30429">
    <property type="entry name" value="D-METHIONINE-BINDING LIPOPROTEIN METQ"/>
    <property type="match status" value="1"/>
</dbReference>
<dbReference type="PANTHER" id="PTHR30429:SF1">
    <property type="entry name" value="D-METHIONINE-BINDING LIPOPROTEIN METQ-RELATED"/>
    <property type="match status" value="1"/>
</dbReference>
<dbReference type="Pfam" id="PF03180">
    <property type="entry name" value="Lipoprotein_9"/>
    <property type="match status" value="1"/>
</dbReference>
<dbReference type="PIRSF" id="PIRSF002854">
    <property type="entry name" value="MetQ"/>
    <property type="match status" value="1"/>
</dbReference>
<dbReference type="SUPFAM" id="SSF53850">
    <property type="entry name" value="Periplasmic binding protein-like II"/>
    <property type="match status" value="1"/>
</dbReference>
<dbReference type="PROSITE" id="PS51257">
    <property type="entry name" value="PROKAR_LIPOPROTEIN"/>
    <property type="match status" value="1"/>
</dbReference>
<keyword id="KW-0998">Cell outer membrane</keyword>
<keyword id="KW-0449">Lipoprotein</keyword>
<keyword id="KW-0472">Membrane</keyword>
<keyword id="KW-0564">Palmitate</keyword>
<keyword id="KW-0732">Signal</keyword>
<feature type="signal peptide" evidence="1">
    <location>
        <begin position="1"/>
        <end position="19"/>
    </location>
</feature>
<feature type="chain" id="PRO_0000019747" description="Outer membrane lipoprotein 1">
    <location>
        <begin position="20"/>
        <end position="277"/>
    </location>
</feature>
<feature type="lipid moiety-binding region" description="N-palmitoyl cysteine" evidence="2">
    <location>
        <position position="20"/>
    </location>
</feature>
<feature type="lipid moiety-binding region" description="S-diacylglycerol cysteine" evidence="2">
    <location>
        <position position="20"/>
    </location>
</feature>
<feature type="sequence conflict" description="In Ref. 2; AAA25546." evidence="2" ref="2">
    <original>A</original>
    <variation>R</variation>
    <location>
        <position position="30"/>
    </location>
</feature>
<feature type="sequence conflict" description="In Ref. 2; AAA25546." evidence="2" ref="2">
    <original>L</original>
    <variation>LIL</variation>
    <location>
        <position position="156"/>
    </location>
</feature>
<feature type="sequence conflict" description="In Ref. 2; AAA25546." evidence="2" ref="2">
    <original>Q</original>
    <variation>L</variation>
    <location>
        <position position="160"/>
    </location>
</feature>
<feature type="sequence conflict" description="In Ref. 2; AAA25546." evidence="2" ref="2">
    <original>KALD</original>
    <variation>NVS</variation>
    <location>
        <begin position="197"/>
        <end position="200"/>
    </location>
</feature>
<protein>
    <recommendedName>
        <fullName>Outer membrane lipoprotein 1</fullName>
    </recommendedName>
    <alternativeName>
        <fullName>PLP1</fullName>
    </alternativeName>
</protein>
<reference key="1">
    <citation type="journal article" date="1993" name="Gene">
        <title>Analysis of tandem, multiple genes encoding 30-kDa membrane proteins in Pasteurella haemolytica A1.</title>
        <authorList>
            <person name="Murphy G.L."/>
            <person name="Whitworth L.C."/>
        </authorList>
    </citation>
    <scope>NUCLEOTIDE SEQUENCE [GENOMIC DNA]</scope>
    <source>
        <strain>Serotype A1</strain>
    </source>
</reference>
<reference key="2">
    <citation type="journal article" date="1993" name="Infect. Immun.">
        <title>Three contiguous lipoprotein genes in Pasteurella haemolytica A1 which are homologous to a lipoprotein gene in Haemophilus influenzae type b.</title>
        <authorList>
            <person name="Cooney B.J."/>
            <person name="Lo R.Y.C."/>
        </authorList>
    </citation>
    <scope>NUCLEOTIDE SEQUENCE [GENOMIC DNA]</scope>
    <source>
        <strain>Serotype A1</strain>
    </source>
</reference>
<name>PLPA_MANHA</name>
<comment type="subcellular location">
    <subcellularLocation>
        <location evidence="2">Cell outer membrane</location>
        <topology evidence="2">Lipid-anchor</topology>
    </subcellularLocation>
</comment>
<comment type="similarity">
    <text evidence="2">Belongs to the NlpA lipoprotein family.</text>
</comment>
<sequence length="277" mass="29992">MSFKKILGVALVSALALTACKEEKKAESTAAPAAQAPAKIKVGVMSGPEHTVAERAAQIAKEKYGLEVEFVLFNDYALPNTAVSKGDLDANAFQHKPYLDKDSQSKGLNNLVIVGNTFVYPLAGYSKKVKNVSELAEGAVIAVPNDPSNLARALILLEKQGLIKLKDNTNLFSTSVDIIENPKNLKIKEVDTSIAAKALDDVDLAVVNNTYAGQVGLNTQDHGVFVESKDSPYVNIIVARQDNKDAANVQNFIKSYQTEEVYQEAQKHFKDGVVKGW</sequence>
<proteinExistence type="inferred from homology"/>
<evidence type="ECO:0000255" key="1">
    <source>
        <dbReference type="PROSITE-ProRule" id="PRU00303"/>
    </source>
</evidence>
<evidence type="ECO:0000305" key="2"/>
<organism>
    <name type="scientific">Mannheimia haemolytica</name>
    <name type="common">Pasteurella haemolytica</name>
    <dbReference type="NCBI Taxonomy" id="75985"/>
    <lineage>
        <taxon>Bacteria</taxon>
        <taxon>Pseudomonadati</taxon>
        <taxon>Pseudomonadota</taxon>
        <taxon>Gammaproteobacteria</taxon>
        <taxon>Pasteurellales</taxon>
        <taxon>Pasteurellaceae</taxon>
        <taxon>Mannheimia</taxon>
    </lineage>
</organism>